<feature type="chain" id="PRO_0000438507" description="Methyl-accepting chemotaxis protein McpP">
    <location>
        <begin position="1"/>
        <end position="544"/>
    </location>
</feature>
<feature type="transmembrane region" description="Helical" evidence="1">
    <location>
        <begin position="12"/>
        <end position="32"/>
    </location>
</feature>
<feature type="transmembrane region" description="Helical" evidence="1">
    <location>
        <begin position="50"/>
        <end position="70"/>
    </location>
</feature>
<feature type="transmembrane region" description="Helical" evidence="1">
    <location>
        <begin position="192"/>
        <end position="212"/>
    </location>
</feature>
<feature type="domain" description="HAMP" evidence="2">
    <location>
        <begin position="213"/>
        <end position="267"/>
    </location>
</feature>
<feature type="domain" description="Methyl-accepting transducer" evidence="3">
    <location>
        <begin position="272"/>
        <end position="508"/>
    </location>
</feature>
<keyword id="KW-1003">Cell membrane</keyword>
<keyword id="KW-0145">Chemotaxis</keyword>
<keyword id="KW-0472">Membrane</keyword>
<keyword id="KW-0488">Methylation</keyword>
<keyword id="KW-1185">Reference proteome</keyword>
<keyword id="KW-0807">Transducer</keyword>
<keyword id="KW-0812">Transmembrane</keyword>
<keyword id="KW-1133">Transmembrane helix</keyword>
<sequence length="544" mass="58659">MNTLRSMSISRRLWLILVVAVAMLVVLGLLMLRQIHGDLYQAKAEKTRHVVQTAAGVLAYYQGLEAAGTLSREAAQQQALQVVRALRYDHDDYFWINDLGPKMIMHPANPKLDDQDLSAIRDPDGFAVFNEMVALARQQDAGPVNYRWPKPGASEPVAKTSYIQLFKPWGWIIGSGVYVDDVQAEFARQLRDASLVGVGIALLMALVVMLIARSIARPLQEAVQAMGNIASGESDLTRRLDTHGSDEITHLGEHFNRFNGKLQGVVGQLQGAAHALAQSAGHVGDNAGAAQQRSAQQSLQMDQVATAVNEVTYAVQDVAKTAEQAAGEMRTAQQQVTHGQQAIHGSLAQIDRLSLTIDEAVQVIRDLAGHSTRIGGVLDVIRSIAEQTNLLALNAAIEAARAGEQGRGFAVVADEVRLLAQRTAQSTAEIHTMIEHLQSQSDAAVKAIDTSSEASRQTVEQAREAGASLDAINQVLNNLTALNASIASATLQQSHVVEEINRNVLDTAGLSQQTADAARQSSDAGVALGRLSEELEQLLRQFRV</sequence>
<name>MCPP_PSEPK</name>
<protein>
    <recommendedName>
        <fullName evidence="6">Methyl-accepting chemotaxis protein McpP</fullName>
    </recommendedName>
</protein>
<reference key="1">
    <citation type="journal article" date="2002" name="Environ. Microbiol.">
        <title>Complete genome sequence and comparative analysis of the metabolically versatile Pseudomonas putida KT2440.</title>
        <authorList>
            <person name="Nelson K.E."/>
            <person name="Weinel C."/>
            <person name="Paulsen I.T."/>
            <person name="Dodson R.J."/>
            <person name="Hilbert H."/>
            <person name="Martins dos Santos V.A.P."/>
            <person name="Fouts D.E."/>
            <person name="Gill S.R."/>
            <person name="Pop M."/>
            <person name="Holmes M."/>
            <person name="Brinkac L.M."/>
            <person name="Beanan M.J."/>
            <person name="DeBoy R.T."/>
            <person name="Daugherty S.C."/>
            <person name="Kolonay J.F."/>
            <person name="Madupu R."/>
            <person name="Nelson W.C."/>
            <person name="White O."/>
            <person name="Peterson J.D."/>
            <person name="Khouri H.M."/>
            <person name="Hance I."/>
            <person name="Chris Lee P."/>
            <person name="Holtzapple E.K."/>
            <person name="Scanlan D."/>
            <person name="Tran K."/>
            <person name="Moazzez A."/>
            <person name="Utterback T.R."/>
            <person name="Rizzo M."/>
            <person name="Lee K."/>
            <person name="Kosack D."/>
            <person name="Moestl D."/>
            <person name="Wedler H."/>
            <person name="Lauber J."/>
            <person name="Stjepandic D."/>
            <person name="Hoheisel J."/>
            <person name="Straetz M."/>
            <person name="Heim S."/>
            <person name="Kiewitz C."/>
            <person name="Eisen J.A."/>
            <person name="Timmis K.N."/>
            <person name="Duesterhoeft A."/>
            <person name="Tuemmler B."/>
            <person name="Fraser C.M."/>
        </authorList>
    </citation>
    <scope>NUCLEOTIDE SEQUENCE [LARGE SCALE GENOMIC DNA]</scope>
    <source>
        <strain>ATCC 47054 / DSM 6125 / CFBP 8728 / NCIMB 11950 / KT2440</strain>
    </source>
</reference>
<reference key="2">
    <citation type="journal article" date="2015" name="Appl. Environ. Microbiol.">
        <title>Identification of a chemoreceptor for C2 and C3 carboxylic acids.</title>
        <authorList>
            <person name="Garcia V."/>
            <person name="Reyes-Darias J.A."/>
            <person name="Martin-Mora D."/>
            <person name="Morel B."/>
            <person name="Matilla M.A."/>
            <person name="Krell T."/>
        </authorList>
    </citation>
    <scope>FUNCTION AS A CHEMORECEPTOR</scope>
    <scope>DISRUPTION PHENOTYPE</scope>
    <source>
        <strain>ATCC 47054 / DSM 6125 / CFBP 8728 / NCIMB 11950 / KT2440</strain>
    </source>
</reference>
<comment type="function">
    <text evidence="4 6">Chemotactic-signal transducers respond to changes in the concentration of attractants and repellents in the environment, transduce a signal from the outside to the inside of the cell, and facilitate sensory adaptation through the variation of the level of methylation. McpP is a chemoreceptor that responds specifically to some C2 and C3 carboxylic acids. Recognizes acetate, pyruvate, propionate, and L-lactate.</text>
</comment>
<comment type="subcellular location">
    <subcellularLocation>
        <location evidence="6">Cell membrane</location>
        <topology evidence="1">Multi-pass membrane protein</topology>
    </subcellularLocation>
</comment>
<comment type="disruption phenotype">
    <text evidence="4">Deletion of the gene does not alter motility but largely reduces chemotaxis to acetate, pyruvate, propionate, and L-lactate.</text>
</comment>
<comment type="similarity">
    <text evidence="6">Belongs to the methyl-accepting chemotaxis (MCP) protein family.</text>
</comment>
<evidence type="ECO:0000255" key="1"/>
<evidence type="ECO:0000255" key="2">
    <source>
        <dbReference type="PROSITE-ProRule" id="PRU00102"/>
    </source>
</evidence>
<evidence type="ECO:0000255" key="3">
    <source>
        <dbReference type="PROSITE-ProRule" id="PRU00284"/>
    </source>
</evidence>
<evidence type="ECO:0000269" key="4">
    <source>
    </source>
</evidence>
<evidence type="ECO:0000303" key="5">
    <source>
    </source>
</evidence>
<evidence type="ECO:0000305" key="6"/>
<evidence type="ECO:0000312" key="7">
    <source>
        <dbReference type="EMBL" id="AAN68469.1"/>
    </source>
</evidence>
<proteinExistence type="evidence at protein level"/>
<organism>
    <name type="scientific">Pseudomonas putida (strain ATCC 47054 / DSM 6125 / CFBP 8728 / NCIMB 11950 / KT2440)</name>
    <dbReference type="NCBI Taxonomy" id="160488"/>
    <lineage>
        <taxon>Bacteria</taxon>
        <taxon>Pseudomonadati</taxon>
        <taxon>Pseudomonadota</taxon>
        <taxon>Gammaproteobacteria</taxon>
        <taxon>Pseudomonadales</taxon>
        <taxon>Pseudomonadaceae</taxon>
        <taxon>Pseudomonas</taxon>
    </lineage>
</organism>
<accession>Q88IY8</accession>
<dbReference type="EMBL" id="AE015451">
    <property type="protein sequence ID" value="AAN68469.1"/>
    <property type="molecule type" value="Genomic_DNA"/>
</dbReference>
<dbReference type="RefSeq" id="NP_745005.1">
    <property type="nucleotide sequence ID" value="NC_002947.4"/>
</dbReference>
<dbReference type="RefSeq" id="WP_010953767.1">
    <property type="nucleotide sequence ID" value="NZ_CP169744.1"/>
</dbReference>
<dbReference type="SMR" id="Q88IY8"/>
<dbReference type="STRING" id="160488.PP_2861"/>
<dbReference type="PaxDb" id="160488-PP_2861"/>
<dbReference type="KEGG" id="ppu:PP_2861"/>
<dbReference type="PATRIC" id="fig|160488.4.peg.3033"/>
<dbReference type="eggNOG" id="COG0840">
    <property type="taxonomic scope" value="Bacteria"/>
</dbReference>
<dbReference type="HOGENOM" id="CLU_000445_107_21_6"/>
<dbReference type="OrthoDB" id="2489132at2"/>
<dbReference type="PhylomeDB" id="Q88IY8"/>
<dbReference type="BioCyc" id="PPUT160488:G1G01-3040-MONOMER"/>
<dbReference type="Proteomes" id="UP000000556">
    <property type="component" value="Chromosome"/>
</dbReference>
<dbReference type="GO" id="GO:0005886">
    <property type="term" value="C:plasma membrane"/>
    <property type="evidence" value="ECO:0007669"/>
    <property type="project" value="UniProtKB-SubCell"/>
</dbReference>
<dbReference type="GO" id="GO:0004888">
    <property type="term" value="F:transmembrane signaling receptor activity"/>
    <property type="evidence" value="ECO:0007669"/>
    <property type="project" value="InterPro"/>
</dbReference>
<dbReference type="GO" id="GO:0006935">
    <property type="term" value="P:chemotaxis"/>
    <property type="evidence" value="ECO:0007669"/>
    <property type="project" value="UniProtKB-KW"/>
</dbReference>
<dbReference type="GO" id="GO:0007165">
    <property type="term" value="P:signal transduction"/>
    <property type="evidence" value="ECO:0007669"/>
    <property type="project" value="UniProtKB-KW"/>
</dbReference>
<dbReference type="CDD" id="cd06225">
    <property type="entry name" value="HAMP"/>
    <property type="match status" value="1"/>
</dbReference>
<dbReference type="CDD" id="cd11386">
    <property type="entry name" value="MCP_signal"/>
    <property type="match status" value="1"/>
</dbReference>
<dbReference type="FunFam" id="1.10.287.950:FF:000001">
    <property type="entry name" value="Methyl-accepting chemotaxis sensory transducer"/>
    <property type="match status" value="1"/>
</dbReference>
<dbReference type="Gene3D" id="1.10.287.950">
    <property type="entry name" value="Methyl-accepting chemotaxis protein"/>
    <property type="match status" value="1"/>
</dbReference>
<dbReference type="Gene3D" id="3.30.450.20">
    <property type="entry name" value="PAS domain"/>
    <property type="match status" value="1"/>
</dbReference>
<dbReference type="InterPro" id="IPR004090">
    <property type="entry name" value="Chemotax_Me-accpt_rcpt"/>
</dbReference>
<dbReference type="InterPro" id="IPR003660">
    <property type="entry name" value="HAMP_dom"/>
</dbReference>
<dbReference type="InterPro" id="IPR004089">
    <property type="entry name" value="MCPsignal_dom"/>
</dbReference>
<dbReference type="InterPro" id="IPR033480">
    <property type="entry name" value="sCache_2"/>
</dbReference>
<dbReference type="PANTHER" id="PTHR32089:SF119">
    <property type="entry name" value="METHYL-ACCEPTING CHEMOTAXIS PROTEIN CTPL"/>
    <property type="match status" value="1"/>
</dbReference>
<dbReference type="PANTHER" id="PTHR32089">
    <property type="entry name" value="METHYL-ACCEPTING CHEMOTAXIS PROTEIN MCPB"/>
    <property type="match status" value="1"/>
</dbReference>
<dbReference type="Pfam" id="PF00672">
    <property type="entry name" value="HAMP"/>
    <property type="match status" value="1"/>
</dbReference>
<dbReference type="Pfam" id="PF00015">
    <property type="entry name" value="MCPsignal"/>
    <property type="match status" value="1"/>
</dbReference>
<dbReference type="Pfam" id="PF17200">
    <property type="entry name" value="sCache_2"/>
    <property type="match status" value="1"/>
</dbReference>
<dbReference type="PRINTS" id="PR00260">
    <property type="entry name" value="CHEMTRNSDUCR"/>
</dbReference>
<dbReference type="SMART" id="SM01049">
    <property type="entry name" value="Cache_2"/>
    <property type="match status" value="1"/>
</dbReference>
<dbReference type="SMART" id="SM00304">
    <property type="entry name" value="HAMP"/>
    <property type="match status" value="1"/>
</dbReference>
<dbReference type="SMART" id="SM00283">
    <property type="entry name" value="MA"/>
    <property type="match status" value="1"/>
</dbReference>
<dbReference type="SUPFAM" id="SSF58104">
    <property type="entry name" value="Methyl-accepting chemotaxis protein (MCP) signaling domain"/>
    <property type="match status" value="1"/>
</dbReference>
<dbReference type="PROSITE" id="PS50111">
    <property type="entry name" value="CHEMOTAXIS_TRANSDUC_2"/>
    <property type="match status" value="1"/>
</dbReference>
<dbReference type="PROSITE" id="PS50885">
    <property type="entry name" value="HAMP"/>
    <property type="match status" value="1"/>
</dbReference>
<gene>
    <name evidence="5" type="primary">mcpP</name>
    <name evidence="7" type="ordered locus">PP_2861</name>
</gene>